<sequence length="9" mass="1091">ARTDNFVRL</sequence>
<feature type="peptide" id="PRO_0000421530" description="Extended FMRFamide-8" evidence="3">
    <location>
        <begin position="1"/>
        <end position="9"/>
    </location>
</feature>
<feature type="modified residue" description="Leucine amide" evidence="3">
    <location>
        <position position="9"/>
    </location>
</feature>
<feature type="unsure residue" description="L or I" evidence="3">
    <location>
        <position position="9"/>
    </location>
</feature>
<reference evidence="5" key="1">
    <citation type="journal article" date="2012" name="Syst. Biol.">
        <title>Peptidomics-based phylogeny and biogeography of Mantophasmatodea (Hexapoda).</title>
        <authorList>
            <person name="Predel R."/>
            <person name="Neupert S."/>
            <person name="Huetteroth W."/>
            <person name="Kahnt J."/>
            <person name="Waidelich D."/>
            <person name="Roth S."/>
        </authorList>
    </citation>
    <scope>PROTEIN SEQUENCE</scope>
    <scope>AMIDATION AT LEU-9</scope>
    <source>
        <tissue evidence="3">Thoracic perisympathetic organs</tissue>
    </source>
</reference>
<organism>
    <name type="scientific">Austrophasma rawsonvillense</name>
    <name type="common">Gladiator</name>
    <name type="synonym">Heel-walker</name>
    <dbReference type="NCBI Taxonomy" id="253137"/>
    <lineage>
        <taxon>Eukaryota</taxon>
        <taxon>Metazoa</taxon>
        <taxon>Ecdysozoa</taxon>
        <taxon>Arthropoda</taxon>
        <taxon>Hexapoda</taxon>
        <taxon>Insecta</taxon>
        <taxon>Pterygota</taxon>
        <taxon>Neoptera</taxon>
        <taxon>Polyneoptera</taxon>
        <taxon>Mantophasmatodea</taxon>
        <taxon>Austrophasmatidae</taxon>
        <taxon>Austrophasma</taxon>
    </lineage>
</organism>
<evidence type="ECO:0000250" key="1">
    <source>
        <dbReference type="UniProtKB" id="P34405"/>
    </source>
</evidence>
<evidence type="ECO:0000255" key="2"/>
<evidence type="ECO:0000269" key="3">
    <source>
    </source>
</evidence>
<evidence type="ECO:0000303" key="4">
    <source>
    </source>
</evidence>
<evidence type="ECO:0000305" key="5"/>
<evidence type="ECO:0000305" key="6">
    <source>
    </source>
</evidence>
<protein>
    <recommendedName>
        <fullName evidence="4">Extended FMRFamide-8</fullName>
        <shortName evidence="4">FMRFa-8</shortName>
    </recommendedName>
</protein>
<keyword id="KW-0027">Amidation</keyword>
<keyword id="KW-0903">Direct protein sequencing</keyword>
<keyword id="KW-0527">Neuropeptide</keyword>
<keyword id="KW-0964">Secreted</keyword>
<proteinExistence type="evidence at protein level"/>
<comment type="function">
    <text evidence="1">FMRFamides and FMRFamide-like peptides are neuropeptides.</text>
</comment>
<comment type="subcellular location">
    <subcellularLocation>
        <location evidence="6">Secreted</location>
    </subcellularLocation>
</comment>
<comment type="similarity">
    <text evidence="2">Belongs to the FARP (FMRF amide related peptide) family.</text>
</comment>
<name>FAR8_AUSRA</name>
<dbReference type="GO" id="GO:0005576">
    <property type="term" value="C:extracellular region"/>
    <property type="evidence" value="ECO:0007669"/>
    <property type="project" value="UniProtKB-SubCell"/>
</dbReference>
<dbReference type="GO" id="GO:0007218">
    <property type="term" value="P:neuropeptide signaling pathway"/>
    <property type="evidence" value="ECO:0007669"/>
    <property type="project" value="UniProtKB-KW"/>
</dbReference>
<accession>B3A0A6</accession>